<evidence type="ECO:0000255" key="1">
    <source>
        <dbReference type="HAMAP-Rule" id="MF_00050"/>
    </source>
</evidence>
<feature type="chain" id="PRO_1000071126" description="Elongation factor Ts">
    <location>
        <begin position="1"/>
        <end position="293"/>
    </location>
</feature>
<feature type="region of interest" description="Involved in Mg(2+) ion dislocation from EF-Tu" evidence="1">
    <location>
        <begin position="80"/>
        <end position="83"/>
    </location>
</feature>
<sequence>MATISAKLVKELREKTGAGMMDCKKALTETDGDIDKAIDYLREKGIAKAAKKADRIAAEGLVHVETKGNDAVIVEINSETDFVARNAGFQELVKEIANQVLDTKAETVEALMETTLPNGKSVDERIKEAISTIGEKLSVRRFAIRTKTDNDAFGAYLHMGGRIGVLTVVEGSTDEEAARDVAMHIAAINPKYVSSEQVSEEEINHEREVLKQQALNEGKPENIVEKMVEGRLRKYLQEICAVDQDFVKNPDVTVEAFLKTKGGKLVDFVRYEVGEGMEKREENFADEVKGQMK</sequence>
<proteinExistence type="inferred from homology"/>
<protein>
    <recommendedName>
        <fullName evidence="1">Elongation factor Ts</fullName>
        <shortName evidence="1">EF-Ts</shortName>
    </recommendedName>
</protein>
<organism>
    <name type="scientific">Staphylococcus aureus (strain Newman)</name>
    <dbReference type="NCBI Taxonomy" id="426430"/>
    <lineage>
        <taxon>Bacteria</taxon>
        <taxon>Bacillati</taxon>
        <taxon>Bacillota</taxon>
        <taxon>Bacilli</taxon>
        <taxon>Bacillales</taxon>
        <taxon>Staphylococcaceae</taxon>
        <taxon>Staphylococcus</taxon>
    </lineage>
</organism>
<accession>A6QGF7</accession>
<dbReference type="EMBL" id="AP009351">
    <property type="protein sequence ID" value="BAF67439.1"/>
    <property type="molecule type" value="Genomic_DNA"/>
</dbReference>
<dbReference type="RefSeq" id="WP_000201385.1">
    <property type="nucleotide sequence ID" value="NC_009641.1"/>
</dbReference>
<dbReference type="SMR" id="A6QGF7"/>
<dbReference type="KEGG" id="sae:NWMN_1167"/>
<dbReference type="HOGENOM" id="CLU_047155_0_2_9"/>
<dbReference type="Proteomes" id="UP000006386">
    <property type="component" value="Chromosome"/>
</dbReference>
<dbReference type="GO" id="GO:0005737">
    <property type="term" value="C:cytoplasm"/>
    <property type="evidence" value="ECO:0007669"/>
    <property type="project" value="UniProtKB-SubCell"/>
</dbReference>
<dbReference type="GO" id="GO:0003746">
    <property type="term" value="F:translation elongation factor activity"/>
    <property type="evidence" value="ECO:0007669"/>
    <property type="project" value="UniProtKB-UniRule"/>
</dbReference>
<dbReference type="CDD" id="cd14275">
    <property type="entry name" value="UBA_EF-Ts"/>
    <property type="match status" value="1"/>
</dbReference>
<dbReference type="FunFam" id="1.10.286.20:FF:000003">
    <property type="entry name" value="Elongation factor Ts"/>
    <property type="match status" value="1"/>
</dbReference>
<dbReference type="FunFam" id="1.10.8.10:FF:000001">
    <property type="entry name" value="Elongation factor Ts"/>
    <property type="match status" value="1"/>
</dbReference>
<dbReference type="Gene3D" id="1.10.286.20">
    <property type="match status" value="1"/>
</dbReference>
<dbReference type="Gene3D" id="1.10.8.10">
    <property type="entry name" value="DNA helicase RuvA subunit, C-terminal domain"/>
    <property type="match status" value="1"/>
</dbReference>
<dbReference type="Gene3D" id="3.30.479.20">
    <property type="entry name" value="Elongation factor Ts, dimerisation domain"/>
    <property type="match status" value="2"/>
</dbReference>
<dbReference type="HAMAP" id="MF_00050">
    <property type="entry name" value="EF_Ts"/>
    <property type="match status" value="1"/>
</dbReference>
<dbReference type="InterPro" id="IPR036402">
    <property type="entry name" value="EF-Ts_dimer_sf"/>
</dbReference>
<dbReference type="InterPro" id="IPR001816">
    <property type="entry name" value="Transl_elong_EFTs/EF1B"/>
</dbReference>
<dbReference type="InterPro" id="IPR014039">
    <property type="entry name" value="Transl_elong_EFTs/EF1B_dimer"/>
</dbReference>
<dbReference type="InterPro" id="IPR018101">
    <property type="entry name" value="Transl_elong_Ts_CS"/>
</dbReference>
<dbReference type="InterPro" id="IPR009060">
    <property type="entry name" value="UBA-like_sf"/>
</dbReference>
<dbReference type="NCBIfam" id="TIGR00116">
    <property type="entry name" value="tsf"/>
    <property type="match status" value="1"/>
</dbReference>
<dbReference type="PANTHER" id="PTHR11741">
    <property type="entry name" value="ELONGATION FACTOR TS"/>
    <property type="match status" value="1"/>
</dbReference>
<dbReference type="PANTHER" id="PTHR11741:SF0">
    <property type="entry name" value="ELONGATION FACTOR TS, MITOCHONDRIAL"/>
    <property type="match status" value="1"/>
</dbReference>
<dbReference type="Pfam" id="PF00889">
    <property type="entry name" value="EF_TS"/>
    <property type="match status" value="1"/>
</dbReference>
<dbReference type="SUPFAM" id="SSF54713">
    <property type="entry name" value="Elongation factor Ts (EF-Ts), dimerisation domain"/>
    <property type="match status" value="2"/>
</dbReference>
<dbReference type="SUPFAM" id="SSF46934">
    <property type="entry name" value="UBA-like"/>
    <property type="match status" value="1"/>
</dbReference>
<dbReference type="PROSITE" id="PS01126">
    <property type="entry name" value="EF_TS_1"/>
    <property type="match status" value="1"/>
</dbReference>
<dbReference type="PROSITE" id="PS01127">
    <property type="entry name" value="EF_TS_2"/>
    <property type="match status" value="1"/>
</dbReference>
<gene>
    <name evidence="1" type="primary">tsf</name>
    <name type="ordered locus">NWMN_1167</name>
</gene>
<keyword id="KW-0963">Cytoplasm</keyword>
<keyword id="KW-0251">Elongation factor</keyword>
<keyword id="KW-0648">Protein biosynthesis</keyword>
<name>EFTS_STAAE</name>
<comment type="function">
    <text evidence="1">Associates with the EF-Tu.GDP complex and induces the exchange of GDP to GTP. It remains bound to the aminoacyl-tRNA.EF-Tu.GTP complex up to the GTP hydrolysis stage on the ribosome.</text>
</comment>
<comment type="subcellular location">
    <subcellularLocation>
        <location evidence="1">Cytoplasm</location>
    </subcellularLocation>
</comment>
<comment type="similarity">
    <text evidence="1">Belongs to the EF-Ts family.</text>
</comment>
<reference key="1">
    <citation type="journal article" date="2008" name="J. Bacteriol.">
        <title>Genome sequence of Staphylococcus aureus strain Newman and comparative analysis of staphylococcal genomes: polymorphism and evolution of two major pathogenicity islands.</title>
        <authorList>
            <person name="Baba T."/>
            <person name="Bae T."/>
            <person name="Schneewind O."/>
            <person name="Takeuchi F."/>
            <person name="Hiramatsu K."/>
        </authorList>
    </citation>
    <scope>NUCLEOTIDE SEQUENCE [LARGE SCALE GENOMIC DNA]</scope>
    <source>
        <strain>Newman</strain>
    </source>
</reference>